<keyword id="KW-0227">DNA damage</keyword>
<keyword id="KW-0234">DNA repair</keyword>
<keyword id="KW-0235">DNA replication</keyword>
<keyword id="KW-0378">Hydrolase</keyword>
<keyword id="KW-0460">Magnesium</keyword>
<keyword id="KW-0464">Manganese</keyword>
<keyword id="KW-0479">Metal-binding</keyword>
<keyword id="KW-0515">Mutator protein</keyword>
<keyword id="KW-1185">Reference proteome</keyword>
<sequence length="217" mass="23499">MPSCPPAYSEQVRGDGDGWVVSDSGVAYWGRYGAAGLLLRAPRPDGTPAVLLQHRALWSHQGGTWGLPGGARDSHETPEQTAVRESSEEAGLSAERLEVRATVVTAEVCGVDDTHWTYTTVVADAGELLDTVPNRESAELRWVAENEVADLPLHPGFAASWQRLRTAPATVPLARCDERRQRLPRTIQIEAGVFLWCTPGDADQAPSPLGRRISSLL</sequence>
<feature type="chain" id="PRO_0000391777" description="Putative 8-oxo-dGTP diphosphatase 3">
    <location>
        <begin position="1"/>
        <end position="217"/>
    </location>
</feature>
<feature type="domain" description="Nudix hydrolase" evidence="2">
    <location>
        <begin position="30"/>
        <end position="164"/>
    </location>
</feature>
<feature type="region of interest" description="Disordered" evidence="3">
    <location>
        <begin position="67"/>
        <end position="92"/>
    </location>
</feature>
<feature type="short sequence motif" description="Nudix box">
    <location>
        <begin position="70"/>
        <end position="91"/>
    </location>
</feature>
<feature type="binding site" evidence="1">
    <location>
        <position position="70"/>
    </location>
    <ligand>
        <name>Mg(2+)</name>
        <dbReference type="ChEBI" id="CHEBI:18420"/>
    </ligand>
</feature>
<feature type="binding site" evidence="1">
    <location>
        <position position="85"/>
    </location>
    <ligand>
        <name>Mg(2+)</name>
        <dbReference type="ChEBI" id="CHEBI:18420"/>
    </ligand>
</feature>
<feature type="binding site" evidence="1">
    <location>
        <position position="88"/>
    </location>
    <ligand>
        <name>Mg(2+)</name>
        <dbReference type="ChEBI" id="CHEBI:18420"/>
    </ligand>
</feature>
<feature type="binding site" evidence="1">
    <location>
        <position position="89"/>
    </location>
    <ligand>
        <name>Mg(2+)</name>
        <dbReference type="ChEBI" id="CHEBI:18420"/>
    </ligand>
</feature>
<proteinExistence type="evidence at protein level"/>
<organism>
    <name type="scientific">Mycobacterium tuberculosis (strain ATCC 25618 / H37Rv)</name>
    <dbReference type="NCBI Taxonomy" id="83332"/>
    <lineage>
        <taxon>Bacteria</taxon>
        <taxon>Bacillati</taxon>
        <taxon>Actinomycetota</taxon>
        <taxon>Actinomycetes</taxon>
        <taxon>Mycobacteriales</taxon>
        <taxon>Mycobacteriaceae</taxon>
        <taxon>Mycobacterium</taxon>
        <taxon>Mycobacterium tuberculosis complex</taxon>
    </lineage>
</organism>
<comment type="function">
    <text evidence="1">May be involved in the GO system responsible for removing an oxidatively damaged form of guanine (7,8-dihydro-8-oxoguanine, 8-oxo-dGTP) from DNA and the nucleotide pool. 8-oxo-dGTP is inserted opposite dA and dC residues of template DNA with almost equal efficiency thus leading to A.T to G.C transversions. MutT specifically degrades 8-oxo-dGTP to the monophosphate (By similarity).</text>
</comment>
<comment type="catalytic activity">
    <reaction>
        <text>8-oxo-dGTP + H2O = 8-oxo-dGMP + diphosphate + H(+)</text>
        <dbReference type="Rhea" id="RHEA:31575"/>
        <dbReference type="ChEBI" id="CHEBI:15377"/>
        <dbReference type="ChEBI" id="CHEBI:15378"/>
        <dbReference type="ChEBI" id="CHEBI:33019"/>
        <dbReference type="ChEBI" id="CHEBI:63224"/>
        <dbReference type="ChEBI" id="CHEBI:77896"/>
        <dbReference type="EC" id="3.6.1.55"/>
    </reaction>
</comment>
<comment type="cofactor">
    <cofactor evidence="1">
        <name>Mg(2+)</name>
        <dbReference type="ChEBI" id="CHEBI:18420"/>
    </cofactor>
    <cofactor evidence="1">
        <name>Mn(2+)</name>
        <dbReference type="ChEBI" id="CHEBI:29035"/>
    </cofactor>
</comment>
<comment type="disruption phenotype">
    <text evidence="4">No visible phenotype.</text>
</comment>
<comment type="miscellaneous">
    <text>There are 4 mutT paralogs in M.tuberculosis; the exact function of each is unknown.</text>
</comment>
<comment type="similarity">
    <text evidence="5">Belongs to the Nudix hydrolase family.</text>
</comment>
<protein>
    <recommendedName>
        <fullName>Putative 8-oxo-dGTP diphosphatase 3</fullName>
        <shortName>8-oxo-dGTPase</shortName>
        <ecNumber>3.6.1.55</ecNumber>
    </recommendedName>
    <alternativeName>
        <fullName>7,8-dihydro-8-oxoguanine-triphosphatase 3</fullName>
    </alternativeName>
    <alternativeName>
        <fullName>Mutator protein MutT3</fullName>
    </alternativeName>
    <alternativeName>
        <fullName>dGTP pyrophosphohydrolase 3</fullName>
    </alternativeName>
</protein>
<dbReference type="EC" id="3.6.1.55"/>
<dbReference type="EMBL" id="AL123456">
    <property type="protein sequence ID" value="CCP43144.1"/>
    <property type="molecule type" value="Genomic_DNA"/>
</dbReference>
<dbReference type="PIR" id="C70629">
    <property type="entry name" value="C70629"/>
</dbReference>
<dbReference type="RefSeq" id="NP_214927.1">
    <property type="nucleotide sequence ID" value="NC_000962.3"/>
</dbReference>
<dbReference type="RefSeq" id="WP_003402111.1">
    <property type="nucleotide sequence ID" value="NC_000962.3"/>
</dbReference>
<dbReference type="SMR" id="P9WIX9"/>
<dbReference type="STRING" id="83332.Rv0413"/>
<dbReference type="PaxDb" id="83332-Rv0413"/>
<dbReference type="DNASU" id="886405"/>
<dbReference type="GeneID" id="886405"/>
<dbReference type="KEGG" id="mtu:Rv0413"/>
<dbReference type="KEGG" id="mtv:RVBD_0413"/>
<dbReference type="PATRIC" id="fig|83332.111.peg.453"/>
<dbReference type="TubercuList" id="Rv0413"/>
<dbReference type="eggNOG" id="COG0494">
    <property type="taxonomic scope" value="Bacteria"/>
</dbReference>
<dbReference type="InParanoid" id="P9WIX9"/>
<dbReference type="OrthoDB" id="3404294at2"/>
<dbReference type="PhylomeDB" id="P9WIX9"/>
<dbReference type="Proteomes" id="UP000001584">
    <property type="component" value="Chromosome"/>
</dbReference>
<dbReference type="GO" id="GO:0035539">
    <property type="term" value="F:8-oxo-7,8-dihydrodeoxyguanosine triphosphate pyrophosphatase activity"/>
    <property type="evidence" value="ECO:0007669"/>
    <property type="project" value="UniProtKB-EC"/>
</dbReference>
<dbReference type="GO" id="GO:0046872">
    <property type="term" value="F:metal ion binding"/>
    <property type="evidence" value="ECO:0007669"/>
    <property type="project" value="UniProtKB-KW"/>
</dbReference>
<dbReference type="GO" id="GO:0006281">
    <property type="term" value="P:DNA repair"/>
    <property type="evidence" value="ECO:0007669"/>
    <property type="project" value="UniProtKB-KW"/>
</dbReference>
<dbReference type="GO" id="GO:0006260">
    <property type="term" value="P:DNA replication"/>
    <property type="evidence" value="ECO:0007669"/>
    <property type="project" value="UniProtKB-KW"/>
</dbReference>
<dbReference type="CDD" id="cd18877">
    <property type="entry name" value="NUDIX_Hydrolase"/>
    <property type="match status" value="1"/>
</dbReference>
<dbReference type="Gene3D" id="3.90.79.10">
    <property type="entry name" value="Nucleoside Triphosphate Pyrophosphohydrolase"/>
    <property type="match status" value="1"/>
</dbReference>
<dbReference type="InterPro" id="IPR020476">
    <property type="entry name" value="Nudix_hydrolase"/>
</dbReference>
<dbReference type="InterPro" id="IPR015797">
    <property type="entry name" value="NUDIX_hydrolase-like_dom_sf"/>
</dbReference>
<dbReference type="InterPro" id="IPR020084">
    <property type="entry name" value="NUDIX_hydrolase_CS"/>
</dbReference>
<dbReference type="InterPro" id="IPR000086">
    <property type="entry name" value="NUDIX_hydrolase_dom"/>
</dbReference>
<dbReference type="PANTHER" id="PTHR43046:SF2">
    <property type="entry name" value="8-OXO-DGTP DIPHOSPHATASE-RELATED"/>
    <property type="match status" value="1"/>
</dbReference>
<dbReference type="PANTHER" id="PTHR43046">
    <property type="entry name" value="GDP-MANNOSE MANNOSYL HYDROLASE"/>
    <property type="match status" value="1"/>
</dbReference>
<dbReference type="Pfam" id="PF00293">
    <property type="entry name" value="NUDIX"/>
    <property type="match status" value="1"/>
</dbReference>
<dbReference type="PRINTS" id="PR00502">
    <property type="entry name" value="NUDIXFAMILY"/>
</dbReference>
<dbReference type="SUPFAM" id="SSF55811">
    <property type="entry name" value="Nudix"/>
    <property type="match status" value="1"/>
</dbReference>
<dbReference type="PROSITE" id="PS51462">
    <property type="entry name" value="NUDIX"/>
    <property type="match status" value="1"/>
</dbReference>
<dbReference type="PROSITE" id="PS00893">
    <property type="entry name" value="NUDIX_BOX"/>
    <property type="match status" value="1"/>
</dbReference>
<reference key="1">
    <citation type="journal article" date="1998" name="Nature">
        <title>Deciphering the biology of Mycobacterium tuberculosis from the complete genome sequence.</title>
        <authorList>
            <person name="Cole S.T."/>
            <person name="Brosch R."/>
            <person name="Parkhill J."/>
            <person name="Garnier T."/>
            <person name="Churcher C.M."/>
            <person name="Harris D.E."/>
            <person name="Gordon S.V."/>
            <person name="Eiglmeier K."/>
            <person name="Gas S."/>
            <person name="Barry C.E. III"/>
            <person name="Tekaia F."/>
            <person name="Badcock K."/>
            <person name="Basham D."/>
            <person name="Brown D."/>
            <person name="Chillingworth T."/>
            <person name="Connor R."/>
            <person name="Davies R.M."/>
            <person name="Devlin K."/>
            <person name="Feltwell T."/>
            <person name="Gentles S."/>
            <person name="Hamlin N."/>
            <person name="Holroyd S."/>
            <person name="Hornsby T."/>
            <person name="Jagels K."/>
            <person name="Krogh A."/>
            <person name="McLean J."/>
            <person name="Moule S."/>
            <person name="Murphy L.D."/>
            <person name="Oliver S."/>
            <person name="Osborne J."/>
            <person name="Quail M.A."/>
            <person name="Rajandream M.A."/>
            <person name="Rogers J."/>
            <person name="Rutter S."/>
            <person name="Seeger K."/>
            <person name="Skelton S."/>
            <person name="Squares S."/>
            <person name="Squares R."/>
            <person name="Sulston J.E."/>
            <person name="Taylor K."/>
            <person name="Whitehead S."/>
            <person name="Barrell B.G."/>
        </authorList>
    </citation>
    <scope>NUCLEOTIDE SEQUENCE [LARGE SCALE GENOMIC DNA]</scope>
    <source>
        <strain>ATCC 25618 / H37Rv</strain>
    </source>
</reference>
<reference key="2">
    <citation type="journal article" date="2006" name="J. Bacteriol.">
        <title>Identification of Nudix hydrolase family members with an antimutator role in Mycobacterium tuberculosis and Mycobacterium smegmatis.</title>
        <authorList>
            <person name="Dos Vultos T."/>
            <person name="Blazquez J."/>
            <person name="Rauzier J."/>
            <person name="Matic I."/>
            <person name="Gicquel B."/>
        </authorList>
    </citation>
    <scope>DISRUPTION PHENOTYPE</scope>
    <source>
        <strain>ATCC 25618 / H37Rv</strain>
    </source>
</reference>
<reference key="3">
    <citation type="journal article" date="2011" name="Mol. Cell. Proteomics">
        <title>Proteogenomic analysis of Mycobacterium tuberculosis by high resolution mass spectrometry.</title>
        <authorList>
            <person name="Kelkar D.S."/>
            <person name="Kumar D."/>
            <person name="Kumar P."/>
            <person name="Balakrishnan L."/>
            <person name="Muthusamy B."/>
            <person name="Yadav A.K."/>
            <person name="Shrivastava P."/>
            <person name="Marimuthu A."/>
            <person name="Anand S."/>
            <person name="Sundaram H."/>
            <person name="Kingsbury R."/>
            <person name="Harsha H.C."/>
            <person name="Nair B."/>
            <person name="Prasad T.S."/>
            <person name="Chauhan D.S."/>
            <person name="Katoch K."/>
            <person name="Katoch V.M."/>
            <person name="Kumar P."/>
            <person name="Chaerkady R."/>
            <person name="Ramachandran S."/>
            <person name="Dash D."/>
            <person name="Pandey A."/>
        </authorList>
    </citation>
    <scope>IDENTIFICATION BY MASS SPECTROMETRY [LARGE SCALE ANALYSIS]</scope>
    <source>
        <strain>ATCC 25618 / H37Rv</strain>
    </source>
</reference>
<gene>
    <name type="primary">mutT3</name>
    <name type="ordered locus">Rv0413</name>
</gene>
<name>MUTT3_MYCTU</name>
<evidence type="ECO:0000250" key="1"/>
<evidence type="ECO:0000255" key="2">
    <source>
        <dbReference type="PROSITE-ProRule" id="PRU00794"/>
    </source>
</evidence>
<evidence type="ECO:0000256" key="3">
    <source>
        <dbReference type="SAM" id="MobiDB-lite"/>
    </source>
</evidence>
<evidence type="ECO:0000269" key="4">
    <source>
    </source>
</evidence>
<evidence type="ECO:0000305" key="5"/>
<accession>P9WIX9</accession>
<accession>L0T5A7</accession>
<accession>P96259</accession>
<accession>Q7D9V1</accession>